<reference key="1">
    <citation type="submission" date="2005-12" db="EMBL/GenBank/DDBJ databases">
        <authorList>
            <consortium name="NIH - Mammalian Gene Collection (MGC) project"/>
        </authorList>
    </citation>
    <scope>NUCLEOTIDE SEQUENCE [LARGE SCALE MRNA]</scope>
    <source>
        <strain>Crossbred X Angus</strain>
        <tissue>Liver</tissue>
    </source>
</reference>
<sequence length="424" mass="46433">MGNITKRGSKGRAADGPKALEGSTAATLHVQLCEAIMRQDCAALRALLRSHPVNQPMTILTSSTGCSLANSRLFLSQETLSFLPIHLAAKYRKAQSLLCLLEHGADPEARDTQGFTTLHLMLLNWPITSTTWTKPRNKIQTMLTDVQRNAVLCLRILCAHGAQVNARVDSGHRHCPLHLATIYGTHLVLSILAQNGAQVNAQNGSSMTPLHMAADILNKEMMQTLIAWGASVNCAVSSTGNTALKLAVSTASSKAGRLLAAGLGCIRLLLVHGAQVNARDHDGQAAIHEACFGGREVIINLLLEFEANVNILTRNGESPIHMYLQRGSNIRDTALLARLLFRSYPLRLTNNQGKLPAGILLPEFHLLRETLLKLSQKPLSLEDICKRNVRNIYGEKHKQLLKRLLPGKIWNSVYGYHDLAHLLK</sequence>
<organism>
    <name type="scientific">Bos taurus</name>
    <name type="common">Bovine</name>
    <dbReference type="NCBI Taxonomy" id="9913"/>
    <lineage>
        <taxon>Eukaryota</taxon>
        <taxon>Metazoa</taxon>
        <taxon>Chordata</taxon>
        <taxon>Craniata</taxon>
        <taxon>Vertebrata</taxon>
        <taxon>Euteleostomi</taxon>
        <taxon>Mammalia</taxon>
        <taxon>Eutheria</taxon>
        <taxon>Laurasiatheria</taxon>
        <taxon>Artiodactyla</taxon>
        <taxon>Ruminantia</taxon>
        <taxon>Pecora</taxon>
        <taxon>Bovidae</taxon>
        <taxon>Bovinae</taxon>
        <taxon>Bos</taxon>
    </lineage>
</organism>
<gene>
    <name type="primary">ANKRD61</name>
</gene>
<protein>
    <recommendedName>
        <fullName>Ankyrin repeat domain-containing protein 61</fullName>
    </recommendedName>
</protein>
<proteinExistence type="evidence at transcript level"/>
<dbReference type="EMBL" id="BC111230">
    <property type="protein sequence ID" value="AAI11231.1"/>
    <property type="molecule type" value="mRNA"/>
</dbReference>
<dbReference type="RefSeq" id="NP_001070540.1">
    <property type="nucleotide sequence ID" value="NM_001077072.1"/>
</dbReference>
<dbReference type="SMR" id="Q2T9W8"/>
<dbReference type="FunCoup" id="Q2T9W8">
    <property type="interactions" value="126"/>
</dbReference>
<dbReference type="STRING" id="9913.ENSBTAP00000009694"/>
<dbReference type="PaxDb" id="9913-ENSBTAP00000009694"/>
<dbReference type="Ensembl" id="ENSBTAT00000009694.4">
    <property type="protein sequence ID" value="ENSBTAP00000009694.3"/>
    <property type="gene ID" value="ENSBTAG00000007372.4"/>
</dbReference>
<dbReference type="GeneID" id="768013"/>
<dbReference type="KEGG" id="bta:768013"/>
<dbReference type="CTD" id="100310846"/>
<dbReference type="VEuPathDB" id="HostDB:ENSBTAG00000007372"/>
<dbReference type="VGNC" id="VGNC:25939">
    <property type="gene designation" value="ANKRD61"/>
</dbReference>
<dbReference type="eggNOG" id="KOG4177">
    <property type="taxonomic scope" value="Eukaryota"/>
</dbReference>
<dbReference type="GeneTree" id="ENSGT00840000130004"/>
<dbReference type="HOGENOM" id="CLU_054056_0_0_1"/>
<dbReference type="InParanoid" id="Q2T9W8"/>
<dbReference type="OMA" id="AINESSM"/>
<dbReference type="OrthoDB" id="194358at2759"/>
<dbReference type="TreeFam" id="TF352214"/>
<dbReference type="Proteomes" id="UP000009136">
    <property type="component" value="Chromosome 25"/>
</dbReference>
<dbReference type="Bgee" id="ENSBTAG00000007372">
    <property type="expression patterns" value="Expressed in semen and 85 other cell types or tissues"/>
</dbReference>
<dbReference type="GO" id="GO:0005654">
    <property type="term" value="C:nucleoplasm"/>
    <property type="evidence" value="ECO:0007669"/>
    <property type="project" value="Ensembl"/>
</dbReference>
<dbReference type="Gene3D" id="1.25.40.20">
    <property type="entry name" value="Ankyrin repeat-containing domain"/>
    <property type="match status" value="3"/>
</dbReference>
<dbReference type="InterPro" id="IPR050663">
    <property type="entry name" value="Ankyrin-SOCS_Box"/>
</dbReference>
<dbReference type="InterPro" id="IPR002110">
    <property type="entry name" value="Ankyrin_rpt"/>
</dbReference>
<dbReference type="InterPro" id="IPR036770">
    <property type="entry name" value="Ankyrin_rpt-contain_sf"/>
</dbReference>
<dbReference type="PANTHER" id="PTHR24193:SF122">
    <property type="entry name" value="ANKYRIN REPEAT DOMAIN-CONTAINING PROTEIN 23"/>
    <property type="match status" value="1"/>
</dbReference>
<dbReference type="PANTHER" id="PTHR24193">
    <property type="entry name" value="ANKYRIN REPEAT PROTEIN"/>
    <property type="match status" value="1"/>
</dbReference>
<dbReference type="Pfam" id="PF00023">
    <property type="entry name" value="Ank"/>
    <property type="match status" value="2"/>
</dbReference>
<dbReference type="Pfam" id="PF12796">
    <property type="entry name" value="Ank_2"/>
    <property type="match status" value="1"/>
</dbReference>
<dbReference type="SMART" id="SM00248">
    <property type="entry name" value="ANK"/>
    <property type="match status" value="7"/>
</dbReference>
<dbReference type="SUPFAM" id="SSF48403">
    <property type="entry name" value="Ankyrin repeat"/>
    <property type="match status" value="1"/>
</dbReference>
<dbReference type="PROSITE" id="PS50297">
    <property type="entry name" value="ANK_REP_REGION"/>
    <property type="match status" value="1"/>
</dbReference>
<dbReference type="PROSITE" id="PS50088">
    <property type="entry name" value="ANK_REPEAT"/>
    <property type="match status" value="5"/>
</dbReference>
<name>ANR61_BOVIN</name>
<accession>Q2T9W8</accession>
<keyword id="KW-0040">ANK repeat</keyword>
<keyword id="KW-1185">Reference proteome</keyword>
<keyword id="KW-0677">Repeat</keyword>
<feature type="chain" id="PRO_0000328761" description="Ankyrin repeat domain-containing protein 61">
    <location>
        <begin position="1"/>
        <end position="424"/>
    </location>
</feature>
<feature type="repeat" description="ANK 1">
    <location>
        <begin position="80"/>
        <end position="109"/>
    </location>
</feature>
<feature type="repeat" description="ANK 2">
    <location>
        <begin position="113"/>
        <end position="169"/>
    </location>
</feature>
<feature type="repeat" description="ANK 3">
    <location>
        <begin position="172"/>
        <end position="201"/>
    </location>
</feature>
<feature type="repeat" description="ANK 4">
    <location>
        <begin position="205"/>
        <end position="234"/>
    </location>
</feature>
<feature type="repeat" description="ANK 5">
    <location>
        <begin position="239"/>
        <end position="278"/>
    </location>
</feature>
<feature type="repeat" description="ANK 6">
    <location>
        <begin position="282"/>
        <end position="311"/>
    </location>
</feature>
<feature type="repeat" description="ANK 7">
    <location>
        <begin position="315"/>
        <end position="348"/>
    </location>
</feature>